<keyword id="KW-0131">Cell cycle</keyword>
<keyword id="KW-0132">Cell division</keyword>
<keyword id="KW-0175">Coiled coil</keyword>
<keyword id="KW-0963">Cytoplasm</keyword>
<keyword id="KW-0967">Endosome</keyword>
<keyword id="KW-1017">Isopeptide bond</keyword>
<keyword id="KW-0449">Lipoprotein</keyword>
<keyword id="KW-0472">Membrane</keyword>
<keyword id="KW-0519">Myristate</keyword>
<keyword id="KW-0597">Phosphoprotein</keyword>
<keyword id="KW-0653">Protein transport</keyword>
<keyword id="KW-1185">Reference proteome</keyword>
<keyword id="KW-0813">Transport</keyword>
<keyword id="KW-0832">Ubl conjugation</keyword>
<reference key="1">
    <citation type="journal article" date="2005" name="Science">
        <title>The transcriptional landscape of the mammalian genome.</title>
        <authorList>
            <person name="Carninci P."/>
            <person name="Kasukawa T."/>
            <person name="Katayama S."/>
            <person name="Gough J."/>
            <person name="Frith M.C."/>
            <person name="Maeda N."/>
            <person name="Oyama R."/>
            <person name="Ravasi T."/>
            <person name="Lenhard B."/>
            <person name="Wells C."/>
            <person name="Kodzius R."/>
            <person name="Shimokawa K."/>
            <person name="Bajic V.B."/>
            <person name="Brenner S.E."/>
            <person name="Batalov S."/>
            <person name="Forrest A.R."/>
            <person name="Zavolan M."/>
            <person name="Davis M.J."/>
            <person name="Wilming L.G."/>
            <person name="Aidinis V."/>
            <person name="Allen J.E."/>
            <person name="Ambesi-Impiombato A."/>
            <person name="Apweiler R."/>
            <person name="Aturaliya R.N."/>
            <person name="Bailey T.L."/>
            <person name="Bansal M."/>
            <person name="Baxter L."/>
            <person name="Beisel K.W."/>
            <person name="Bersano T."/>
            <person name="Bono H."/>
            <person name="Chalk A.M."/>
            <person name="Chiu K.P."/>
            <person name="Choudhary V."/>
            <person name="Christoffels A."/>
            <person name="Clutterbuck D.R."/>
            <person name="Crowe M.L."/>
            <person name="Dalla E."/>
            <person name="Dalrymple B.P."/>
            <person name="de Bono B."/>
            <person name="Della Gatta G."/>
            <person name="di Bernardo D."/>
            <person name="Down T."/>
            <person name="Engstrom P."/>
            <person name="Fagiolini M."/>
            <person name="Faulkner G."/>
            <person name="Fletcher C.F."/>
            <person name="Fukushima T."/>
            <person name="Furuno M."/>
            <person name="Futaki S."/>
            <person name="Gariboldi M."/>
            <person name="Georgii-Hemming P."/>
            <person name="Gingeras T.R."/>
            <person name="Gojobori T."/>
            <person name="Green R.E."/>
            <person name="Gustincich S."/>
            <person name="Harbers M."/>
            <person name="Hayashi Y."/>
            <person name="Hensch T.K."/>
            <person name="Hirokawa N."/>
            <person name="Hill D."/>
            <person name="Huminiecki L."/>
            <person name="Iacono M."/>
            <person name="Ikeo K."/>
            <person name="Iwama A."/>
            <person name="Ishikawa T."/>
            <person name="Jakt M."/>
            <person name="Kanapin A."/>
            <person name="Katoh M."/>
            <person name="Kawasawa Y."/>
            <person name="Kelso J."/>
            <person name="Kitamura H."/>
            <person name="Kitano H."/>
            <person name="Kollias G."/>
            <person name="Krishnan S.P."/>
            <person name="Kruger A."/>
            <person name="Kummerfeld S.K."/>
            <person name="Kurochkin I.V."/>
            <person name="Lareau L.F."/>
            <person name="Lazarevic D."/>
            <person name="Lipovich L."/>
            <person name="Liu J."/>
            <person name="Liuni S."/>
            <person name="McWilliam S."/>
            <person name="Madan Babu M."/>
            <person name="Madera M."/>
            <person name="Marchionni L."/>
            <person name="Matsuda H."/>
            <person name="Matsuzawa S."/>
            <person name="Miki H."/>
            <person name="Mignone F."/>
            <person name="Miyake S."/>
            <person name="Morris K."/>
            <person name="Mottagui-Tabar S."/>
            <person name="Mulder N."/>
            <person name="Nakano N."/>
            <person name="Nakauchi H."/>
            <person name="Ng P."/>
            <person name="Nilsson R."/>
            <person name="Nishiguchi S."/>
            <person name="Nishikawa S."/>
            <person name="Nori F."/>
            <person name="Ohara O."/>
            <person name="Okazaki Y."/>
            <person name="Orlando V."/>
            <person name="Pang K.C."/>
            <person name="Pavan W.J."/>
            <person name="Pavesi G."/>
            <person name="Pesole G."/>
            <person name="Petrovsky N."/>
            <person name="Piazza S."/>
            <person name="Reed J."/>
            <person name="Reid J.F."/>
            <person name="Ring B.Z."/>
            <person name="Ringwald M."/>
            <person name="Rost B."/>
            <person name="Ruan Y."/>
            <person name="Salzberg S.L."/>
            <person name="Sandelin A."/>
            <person name="Schneider C."/>
            <person name="Schoenbach C."/>
            <person name="Sekiguchi K."/>
            <person name="Semple C.A."/>
            <person name="Seno S."/>
            <person name="Sessa L."/>
            <person name="Sheng Y."/>
            <person name="Shibata Y."/>
            <person name="Shimada H."/>
            <person name="Shimada K."/>
            <person name="Silva D."/>
            <person name="Sinclair B."/>
            <person name="Sperling S."/>
            <person name="Stupka E."/>
            <person name="Sugiura K."/>
            <person name="Sultana R."/>
            <person name="Takenaka Y."/>
            <person name="Taki K."/>
            <person name="Tammoja K."/>
            <person name="Tan S.L."/>
            <person name="Tang S."/>
            <person name="Taylor M.S."/>
            <person name="Tegner J."/>
            <person name="Teichmann S.A."/>
            <person name="Ueda H.R."/>
            <person name="van Nimwegen E."/>
            <person name="Verardo R."/>
            <person name="Wei C.L."/>
            <person name="Yagi K."/>
            <person name="Yamanishi H."/>
            <person name="Zabarovsky E."/>
            <person name="Zhu S."/>
            <person name="Zimmer A."/>
            <person name="Hide W."/>
            <person name="Bult C."/>
            <person name="Grimmond S.M."/>
            <person name="Teasdale R.D."/>
            <person name="Liu E.T."/>
            <person name="Brusic V."/>
            <person name="Quackenbush J."/>
            <person name="Wahlestedt C."/>
            <person name="Mattick J.S."/>
            <person name="Hume D.A."/>
            <person name="Kai C."/>
            <person name="Sasaki D."/>
            <person name="Tomaru Y."/>
            <person name="Fukuda S."/>
            <person name="Kanamori-Katayama M."/>
            <person name="Suzuki M."/>
            <person name="Aoki J."/>
            <person name="Arakawa T."/>
            <person name="Iida J."/>
            <person name="Imamura K."/>
            <person name="Itoh M."/>
            <person name="Kato T."/>
            <person name="Kawaji H."/>
            <person name="Kawagashira N."/>
            <person name="Kawashima T."/>
            <person name="Kojima M."/>
            <person name="Kondo S."/>
            <person name="Konno H."/>
            <person name="Nakano K."/>
            <person name="Ninomiya N."/>
            <person name="Nishio T."/>
            <person name="Okada M."/>
            <person name="Plessy C."/>
            <person name="Shibata K."/>
            <person name="Shiraki T."/>
            <person name="Suzuki S."/>
            <person name="Tagami M."/>
            <person name="Waki K."/>
            <person name="Watahiki A."/>
            <person name="Okamura-Oho Y."/>
            <person name="Suzuki H."/>
            <person name="Kawai J."/>
            <person name="Hayashizaki Y."/>
        </authorList>
    </citation>
    <scope>NUCLEOTIDE SEQUENCE [LARGE SCALE MRNA]</scope>
    <source>
        <strain>C57BL/6J</strain>
        <tissue>Cecum</tissue>
        <tissue>Testis</tissue>
        <tissue>Tongue</tissue>
    </source>
</reference>
<reference key="2">
    <citation type="journal article" date="2004" name="Genome Res.">
        <title>The status, quality, and expansion of the NIH full-length cDNA project: the Mammalian Gene Collection (MGC).</title>
        <authorList>
            <consortium name="The MGC Project Team"/>
        </authorList>
    </citation>
    <scope>NUCLEOTIDE SEQUENCE [LARGE SCALE MRNA]</scope>
    <source>
        <strain>129</strain>
        <tissue>Mammary tumor</tissue>
    </source>
</reference>
<reference key="3">
    <citation type="journal article" date="2004" name="Mol. Cell. Proteomics">
        <title>Phosphoproteomic analysis of the developing mouse brain.</title>
        <authorList>
            <person name="Ballif B.A."/>
            <person name="Villen J."/>
            <person name="Beausoleil S.A."/>
            <person name="Schwartz D."/>
            <person name="Gygi S.P."/>
        </authorList>
    </citation>
    <scope>PHOSPHORYLATION [LARGE SCALE ANALYSIS] AT SER-200</scope>
    <scope>IDENTIFICATION BY MASS SPECTROMETRY [LARGE SCALE ANALYSIS]</scope>
    <source>
        <tissue>Embryonic brain</tissue>
    </source>
</reference>
<reference key="4">
    <citation type="journal article" date="2007" name="Gene">
        <title>Characterization of a novel alternatively spliced human transcript encoding an N-terminally truncated Vps24 protein that suppresses the effects of Bax in an ESCRT independent manner in yeast.</title>
        <authorList>
            <person name="Khoury C.M."/>
            <person name="Yang Z."/>
            <person name="Ismail S."/>
            <person name="Greenwood M.T."/>
        </authorList>
    </citation>
    <scope>TISSUE SPECIFICITY</scope>
</reference>
<reference key="5">
    <citation type="journal article" date="2010" name="Cell">
        <title>A tissue-specific atlas of mouse protein phosphorylation and expression.</title>
        <authorList>
            <person name="Huttlin E.L."/>
            <person name="Jedrychowski M.P."/>
            <person name="Elias J.E."/>
            <person name="Goswami T."/>
            <person name="Rad R."/>
            <person name="Beausoleil S.A."/>
            <person name="Villen J."/>
            <person name="Haas W."/>
            <person name="Sowa M.E."/>
            <person name="Gygi S.P."/>
        </authorList>
    </citation>
    <scope>IDENTIFICATION BY MASS SPECTROMETRY [LARGE SCALE ANALYSIS]</scope>
    <source>
        <tissue>Brain</tissue>
        <tissue>Brown adipose tissue</tissue>
        <tissue>Heart</tissue>
        <tissue>Lung</tissue>
        <tissue>Pancreas</tissue>
        <tissue>Spleen</tissue>
        <tissue>Testis</tissue>
    </source>
</reference>
<feature type="initiator methionine" description="Removed" evidence="3">
    <location>
        <position position="1"/>
    </location>
</feature>
<feature type="chain" id="PRO_0000211481" description="Charged multivesicular body protein 3">
    <location>
        <begin position="2"/>
        <end position="224"/>
    </location>
</feature>
<feature type="region of interest" description="Intramolecular interaction with C-terminus" evidence="1">
    <location>
        <begin position="2"/>
        <end position="113"/>
    </location>
</feature>
<feature type="region of interest" description="Important for autoinhibitory function" evidence="1">
    <location>
        <begin position="59"/>
        <end position="64"/>
    </location>
</feature>
<feature type="region of interest" description="Interaction with VPS4A" evidence="1">
    <location>
        <begin position="151"/>
        <end position="224"/>
    </location>
</feature>
<feature type="region of interest" description="Intramolecular interaction with N-terminus" evidence="1">
    <location>
        <begin position="151"/>
        <end position="222"/>
    </location>
</feature>
<feature type="region of interest" description="Important for autoinhibitory function" evidence="1">
    <location>
        <begin position="168"/>
        <end position="169"/>
    </location>
</feature>
<feature type="region of interest" description="Disordered" evidence="4">
    <location>
        <begin position="180"/>
        <end position="224"/>
    </location>
</feature>
<feature type="region of interest" description="Interaction with STAMBP" evidence="1">
    <location>
        <begin position="196"/>
        <end position="224"/>
    </location>
</feature>
<feature type="region of interest" description="Interaction with STAMBP" evidence="1">
    <location>
        <begin position="205"/>
        <end position="209"/>
    </location>
</feature>
<feature type="region of interest" description="Interaction with STAMBP" evidence="1">
    <location>
        <begin position="223"/>
        <end position="224"/>
    </location>
</feature>
<feature type="coiled-coil region" evidence="3">
    <location>
        <begin position="22"/>
        <end position="54"/>
    </location>
</feature>
<feature type="coiled-coil region" evidence="3">
    <location>
        <begin position="149"/>
        <end position="224"/>
    </location>
</feature>
<feature type="short sequence motif" description="MIT-interacting motif" evidence="1">
    <location>
        <begin position="201"/>
        <end position="213"/>
    </location>
</feature>
<feature type="compositionally biased region" description="Acidic residues" evidence="4">
    <location>
        <begin position="201"/>
        <end position="213"/>
    </location>
</feature>
<feature type="site" description="Important for autoinhibitory function" evidence="1">
    <location>
        <position position="48"/>
    </location>
</feature>
<feature type="site" description="Interaction with STAMBP" evidence="1">
    <location>
        <position position="218"/>
    </location>
</feature>
<feature type="modified residue" description="Phosphoserine" evidence="7">
    <location>
        <position position="200"/>
    </location>
</feature>
<feature type="lipid moiety-binding region" description="N-myristoyl glycine" evidence="3">
    <location>
        <position position="2"/>
    </location>
</feature>
<feature type="cross-link" description="Glycyl lysine isopeptide (Lys-Gly) (interchain with G-Cter in ubiquitin)" evidence="2">
    <location>
        <position position="179"/>
    </location>
</feature>
<feature type="sequence conflict" description="In Ref. 1; BAB26273." evidence="6" ref="1">
    <original>T</original>
    <variation>S</variation>
    <location>
        <position position="7"/>
    </location>
</feature>
<feature type="sequence conflict" description="In Ref. 1; BAB31306." evidence="6" ref="1">
    <original>A</original>
    <variation>V</variation>
    <location>
        <position position="161"/>
    </location>
</feature>
<feature type="sequence conflict" description="In Ref. 1; BAB31306." evidence="6" ref="1">
    <original>F</original>
    <variation>L</variation>
    <location>
        <position position="170"/>
    </location>
</feature>
<sequence>MGLFGKTQEKPPKELVNEWSLKIRKEMRVVDRQIRDIQREEEKVKRSVKDAAKKGQKEVCVVLAKEMIRSRKAVSKLYASKAHMNSVLMGMKNQLAVLRVAGSLQKSTEVMKAMQSLVKIPEIQATMRELSKEMMKAGIIEEMLEDTFESMDDQEEMEEAAEMEIDRILFEITAGALGKAPSKVTDALPEPEPAGAMAASEEGEEEEDEEDLEAMQSRLATLRS</sequence>
<proteinExistence type="evidence at protein level"/>
<protein>
    <recommendedName>
        <fullName>Charged multivesicular body protein 3</fullName>
    </recommendedName>
    <alternativeName>
        <fullName>Chromatin-modifying protein 3</fullName>
    </alternativeName>
    <alternativeName>
        <fullName>Vacuolar protein sorting-associated protein 24</fullName>
    </alternativeName>
</protein>
<dbReference type="EMBL" id="AK009414">
    <property type="protein sequence ID" value="BAB26273.1"/>
    <property type="molecule type" value="mRNA"/>
</dbReference>
<dbReference type="EMBL" id="AK014818">
    <property type="protein sequence ID" value="BAB29566.1"/>
    <property type="molecule type" value="mRNA"/>
</dbReference>
<dbReference type="EMBL" id="AK016677">
    <property type="protein sequence ID" value="BAB30375.1"/>
    <property type="molecule type" value="mRNA"/>
</dbReference>
<dbReference type="EMBL" id="AK018611">
    <property type="protein sequence ID" value="BAB31306.1"/>
    <property type="molecule type" value="mRNA"/>
</dbReference>
<dbReference type="EMBL" id="AK083562">
    <property type="protein sequence ID" value="BAC38951.1"/>
    <property type="molecule type" value="mRNA"/>
</dbReference>
<dbReference type="EMBL" id="BC049964">
    <property type="protein sequence ID" value="AAH49964.1"/>
    <property type="molecule type" value="mRNA"/>
</dbReference>
<dbReference type="CCDS" id="CCDS20232.1"/>
<dbReference type="RefSeq" id="NP_001348334.1">
    <property type="nucleotide sequence ID" value="NM_001361405.1"/>
</dbReference>
<dbReference type="RefSeq" id="NP_080059.2">
    <property type="nucleotide sequence ID" value="NM_025783.3"/>
</dbReference>
<dbReference type="SMR" id="Q9CQ10"/>
<dbReference type="BioGRID" id="211654">
    <property type="interactions" value="27"/>
</dbReference>
<dbReference type="ComplexPortal" id="CPX-332">
    <property type="entry name" value="ESCRT-III complex, variant Chmp1b1"/>
</dbReference>
<dbReference type="ComplexPortal" id="CPX-333">
    <property type="entry name" value="ESCRT-III complex, variant Chmp1b2"/>
</dbReference>
<dbReference type="FunCoup" id="Q9CQ10">
    <property type="interactions" value="2817"/>
</dbReference>
<dbReference type="IntAct" id="Q9CQ10">
    <property type="interactions" value="22"/>
</dbReference>
<dbReference type="MINT" id="Q9CQ10"/>
<dbReference type="STRING" id="10090.ENSMUSP00000109815"/>
<dbReference type="ChEMBL" id="CHEMBL4879506"/>
<dbReference type="iPTMnet" id="Q9CQ10"/>
<dbReference type="PhosphoSitePlus" id="Q9CQ10"/>
<dbReference type="jPOST" id="Q9CQ10"/>
<dbReference type="PaxDb" id="10090-ENSMUSP00000109815"/>
<dbReference type="PeptideAtlas" id="Q9CQ10"/>
<dbReference type="ProteomicsDB" id="281464"/>
<dbReference type="Pumba" id="Q9CQ10"/>
<dbReference type="DNASU" id="66700"/>
<dbReference type="Ensembl" id="ENSMUST00000059462.12">
    <property type="protein sequence ID" value="ENSMUSP00000109815.4"/>
    <property type="gene ID" value="ENSMUSG00000053119.12"/>
</dbReference>
<dbReference type="Ensembl" id="ENSMUST00000065364.5">
    <property type="protein sequence ID" value="ENSMUSP00000068410.3"/>
    <property type="gene ID" value="ENSMUSG00000053119.12"/>
</dbReference>
<dbReference type="GeneID" id="66700"/>
<dbReference type="KEGG" id="mmu:66700"/>
<dbReference type="UCSC" id="uc009cgw.1">
    <property type="organism name" value="mouse"/>
</dbReference>
<dbReference type="AGR" id="MGI:1913950"/>
<dbReference type="CTD" id="51652"/>
<dbReference type="MGI" id="MGI:1913950">
    <property type="gene designation" value="Chmp3"/>
</dbReference>
<dbReference type="VEuPathDB" id="HostDB:ENSMUSG00000053119"/>
<dbReference type="eggNOG" id="KOG3229">
    <property type="taxonomic scope" value="Eukaryota"/>
</dbReference>
<dbReference type="GeneTree" id="ENSGT00950000182832"/>
<dbReference type="HOGENOM" id="CLU_069208_0_1_1"/>
<dbReference type="InParanoid" id="Q9CQ10"/>
<dbReference type="OMA" id="KILWEVT"/>
<dbReference type="OrthoDB" id="2329734at2759"/>
<dbReference type="PhylomeDB" id="Q9CQ10"/>
<dbReference type="TreeFam" id="TF105848"/>
<dbReference type="Reactome" id="R-MMU-1632852">
    <property type="pathway name" value="Macroautophagy"/>
</dbReference>
<dbReference type="Reactome" id="R-MMU-5620971">
    <property type="pathway name" value="Pyroptosis"/>
</dbReference>
<dbReference type="Reactome" id="R-MMU-917729">
    <property type="pathway name" value="Endosomal Sorting Complex Required For Transport (ESCRT)"/>
</dbReference>
<dbReference type="Reactome" id="R-MMU-9668328">
    <property type="pathway name" value="Sealing of the nuclear envelope (NE) by ESCRT-III"/>
</dbReference>
<dbReference type="BioGRID-ORCS" id="66700">
    <property type="hits" value="22 hits in 84 CRISPR screens"/>
</dbReference>
<dbReference type="ChiTaRS" id="Chmp3">
    <property type="organism name" value="mouse"/>
</dbReference>
<dbReference type="PRO" id="PR:Q9CQ10"/>
<dbReference type="Proteomes" id="UP000000589">
    <property type="component" value="Chromosome 6"/>
</dbReference>
<dbReference type="RNAct" id="Q9CQ10">
    <property type="molecule type" value="protein"/>
</dbReference>
<dbReference type="Bgee" id="ENSMUSG00000053119">
    <property type="expression patterns" value="Expressed in granulocyte and 258 other cell types or tissues"/>
</dbReference>
<dbReference type="ExpressionAtlas" id="Q9CQ10">
    <property type="expression patterns" value="baseline and differential"/>
</dbReference>
<dbReference type="GO" id="GO:1904930">
    <property type="term" value="C:amphisome membrane"/>
    <property type="evidence" value="ECO:0000266"/>
    <property type="project" value="ComplexPortal"/>
</dbReference>
<dbReference type="GO" id="GO:0000421">
    <property type="term" value="C:autophagosome membrane"/>
    <property type="evidence" value="ECO:0000266"/>
    <property type="project" value="ComplexPortal"/>
</dbReference>
<dbReference type="GO" id="GO:0005829">
    <property type="term" value="C:cytosol"/>
    <property type="evidence" value="ECO:0007669"/>
    <property type="project" value="UniProtKB-SubCell"/>
</dbReference>
<dbReference type="GO" id="GO:0005769">
    <property type="term" value="C:early endosome"/>
    <property type="evidence" value="ECO:0007669"/>
    <property type="project" value="Ensembl"/>
</dbReference>
<dbReference type="GO" id="GO:0000815">
    <property type="term" value="C:ESCRT III complex"/>
    <property type="evidence" value="ECO:0007669"/>
    <property type="project" value="Ensembl"/>
</dbReference>
<dbReference type="GO" id="GO:0000776">
    <property type="term" value="C:kinetochore"/>
    <property type="evidence" value="ECO:0000266"/>
    <property type="project" value="ComplexPortal"/>
</dbReference>
<dbReference type="GO" id="GO:0005828">
    <property type="term" value="C:kinetochore microtubule"/>
    <property type="evidence" value="ECO:0000266"/>
    <property type="project" value="ComplexPortal"/>
</dbReference>
<dbReference type="GO" id="GO:0005765">
    <property type="term" value="C:lysosomal membrane"/>
    <property type="evidence" value="ECO:0000266"/>
    <property type="project" value="ComplexPortal"/>
</dbReference>
<dbReference type="GO" id="GO:0030496">
    <property type="term" value="C:midbody"/>
    <property type="evidence" value="ECO:0000266"/>
    <property type="project" value="ComplexPortal"/>
</dbReference>
<dbReference type="GO" id="GO:0032585">
    <property type="term" value="C:multivesicular body membrane"/>
    <property type="evidence" value="ECO:0000266"/>
    <property type="project" value="ComplexPortal"/>
</dbReference>
<dbReference type="GO" id="GO:0005643">
    <property type="term" value="C:nuclear pore"/>
    <property type="evidence" value="ECO:0000266"/>
    <property type="project" value="ComplexPortal"/>
</dbReference>
<dbReference type="GO" id="GO:0005886">
    <property type="term" value="C:plasma membrane"/>
    <property type="evidence" value="ECO:0000266"/>
    <property type="project" value="ComplexPortal"/>
</dbReference>
<dbReference type="GO" id="GO:0031210">
    <property type="term" value="F:phosphatidylcholine binding"/>
    <property type="evidence" value="ECO:0007669"/>
    <property type="project" value="Ensembl"/>
</dbReference>
<dbReference type="GO" id="GO:0005546">
    <property type="term" value="F:phosphatidylinositol-4,5-bisphosphate binding"/>
    <property type="evidence" value="ECO:0007669"/>
    <property type="project" value="Ensembl"/>
</dbReference>
<dbReference type="GO" id="GO:1990381">
    <property type="term" value="F:ubiquitin-specific protease binding"/>
    <property type="evidence" value="ECO:0007669"/>
    <property type="project" value="Ensembl"/>
</dbReference>
<dbReference type="GO" id="GO:0097352">
    <property type="term" value="P:autophagosome maturation"/>
    <property type="evidence" value="ECO:0000266"/>
    <property type="project" value="ComplexPortal"/>
</dbReference>
<dbReference type="GO" id="GO:0006914">
    <property type="term" value="P:autophagy"/>
    <property type="evidence" value="ECO:0000266"/>
    <property type="project" value="ComplexPortal"/>
</dbReference>
<dbReference type="GO" id="GO:1902774">
    <property type="term" value="P:late endosome to lysosome transport"/>
    <property type="evidence" value="ECO:0000266"/>
    <property type="project" value="ComplexPortal"/>
</dbReference>
<dbReference type="GO" id="GO:0090148">
    <property type="term" value="P:membrane fission"/>
    <property type="evidence" value="ECO:0000303"/>
    <property type="project" value="ComplexPortal"/>
</dbReference>
<dbReference type="GO" id="GO:0061952">
    <property type="term" value="P:midbody abscission"/>
    <property type="evidence" value="ECO:0000266"/>
    <property type="project" value="ComplexPortal"/>
</dbReference>
<dbReference type="GO" id="GO:0007080">
    <property type="term" value="P:mitotic metaphase chromosome alignment"/>
    <property type="evidence" value="ECO:0000266"/>
    <property type="project" value="ComplexPortal"/>
</dbReference>
<dbReference type="GO" id="GO:0036258">
    <property type="term" value="P:multivesicular body assembly"/>
    <property type="evidence" value="ECO:0000303"/>
    <property type="project" value="ComplexPortal"/>
</dbReference>
<dbReference type="GO" id="GO:0071985">
    <property type="term" value="P:multivesicular body sorting pathway"/>
    <property type="evidence" value="ECO:0000266"/>
    <property type="project" value="ComplexPortal"/>
</dbReference>
<dbReference type="GO" id="GO:0061763">
    <property type="term" value="P:multivesicular body-lysosome fusion"/>
    <property type="evidence" value="ECO:0000303"/>
    <property type="project" value="ComplexPortal"/>
</dbReference>
<dbReference type="GO" id="GO:0031468">
    <property type="term" value="P:nuclear membrane reassembly"/>
    <property type="evidence" value="ECO:0000266"/>
    <property type="project" value="ComplexPortal"/>
</dbReference>
<dbReference type="GO" id="GO:0006997">
    <property type="term" value="P:nucleus organization"/>
    <property type="evidence" value="ECO:0000266"/>
    <property type="project" value="ComplexPortal"/>
</dbReference>
<dbReference type="GO" id="GO:0001778">
    <property type="term" value="P:plasma membrane repair"/>
    <property type="evidence" value="ECO:0000266"/>
    <property type="project" value="ComplexPortal"/>
</dbReference>
<dbReference type="GO" id="GO:0032467">
    <property type="term" value="P:positive regulation of cytokinesis"/>
    <property type="evidence" value="ECO:0007669"/>
    <property type="project" value="Ensembl"/>
</dbReference>
<dbReference type="GO" id="GO:0051258">
    <property type="term" value="P:protein polymerization"/>
    <property type="evidence" value="ECO:0007669"/>
    <property type="project" value="Ensembl"/>
</dbReference>
<dbReference type="GO" id="GO:0015031">
    <property type="term" value="P:protein transport"/>
    <property type="evidence" value="ECO:0007669"/>
    <property type="project" value="UniProtKB-KW"/>
</dbReference>
<dbReference type="GO" id="GO:0010824">
    <property type="term" value="P:regulation of centrosome duplication"/>
    <property type="evidence" value="ECO:0007669"/>
    <property type="project" value="Ensembl"/>
</dbReference>
<dbReference type="GO" id="GO:2000641">
    <property type="term" value="P:regulation of early endosome to late endosome transport"/>
    <property type="evidence" value="ECO:0007669"/>
    <property type="project" value="Ensembl"/>
</dbReference>
<dbReference type="GO" id="GO:0051036">
    <property type="term" value="P:regulation of endosome size"/>
    <property type="evidence" value="ECO:0007669"/>
    <property type="project" value="Ensembl"/>
</dbReference>
<dbReference type="GO" id="GO:1901673">
    <property type="term" value="P:regulation of mitotic spindle assembly"/>
    <property type="evidence" value="ECO:0000266"/>
    <property type="project" value="ComplexPortal"/>
</dbReference>
<dbReference type="GO" id="GO:0044790">
    <property type="term" value="P:suppression of viral release by host"/>
    <property type="evidence" value="ECO:0007669"/>
    <property type="project" value="Ensembl"/>
</dbReference>
<dbReference type="GO" id="GO:0043162">
    <property type="term" value="P:ubiquitin-dependent protein catabolic process via the multivesicular body sorting pathway"/>
    <property type="evidence" value="ECO:0000266"/>
    <property type="project" value="ComplexPortal"/>
</dbReference>
<dbReference type="GO" id="GO:0051469">
    <property type="term" value="P:vesicle fusion with vacuole"/>
    <property type="evidence" value="ECO:0000303"/>
    <property type="project" value="ComplexPortal"/>
</dbReference>
<dbReference type="GO" id="GO:0046761">
    <property type="term" value="P:viral budding from plasma membrane"/>
    <property type="evidence" value="ECO:0000266"/>
    <property type="project" value="ComplexPortal"/>
</dbReference>
<dbReference type="GO" id="GO:0039702">
    <property type="term" value="P:viral budding via host ESCRT complex"/>
    <property type="evidence" value="ECO:0000266"/>
    <property type="project" value="ComplexPortal"/>
</dbReference>
<dbReference type="Gene3D" id="6.10.140.1230">
    <property type="match status" value="1"/>
</dbReference>
<dbReference type="InterPro" id="IPR005024">
    <property type="entry name" value="Snf7_fam"/>
</dbReference>
<dbReference type="PANTHER" id="PTHR10476">
    <property type="entry name" value="CHARGED MULTIVESICULAR BODY PROTEIN"/>
    <property type="match status" value="1"/>
</dbReference>
<dbReference type="Pfam" id="PF03357">
    <property type="entry name" value="Snf7"/>
    <property type="match status" value="1"/>
</dbReference>
<organism>
    <name type="scientific">Mus musculus</name>
    <name type="common">Mouse</name>
    <dbReference type="NCBI Taxonomy" id="10090"/>
    <lineage>
        <taxon>Eukaryota</taxon>
        <taxon>Metazoa</taxon>
        <taxon>Chordata</taxon>
        <taxon>Craniata</taxon>
        <taxon>Vertebrata</taxon>
        <taxon>Euteleostomi</taxon>
        <taxon>Mammalia</taxon>
        <taxon>Eutheria</taxon>
        <taxon>Euarchontoglires</taxon>
        <taxon>Glires</taxon>
        <taxon>Rodentia</taxon>
        <taxon>Myomorpha</taxon>
        <taxon>Muroidea</taxon>
        <taxon>Muridae</taxon>
        <taxon>Murinae</taxon>
        <taxon>Mus</taxon>
        <taxon>Mus</taxon>
    </lineage>
</organism>
<comment type="function">
    <text evidence="1">Probable core component of the endosomal sorting required for transport complex III (ESCRT-III) which is involved in multivesicular bodies (MVBs) formation and sorting of endosomal cargo proteins into MVBs. MVBs contain intraluminal vesicles (ILVs) that are generated by invagination and scission from the limiting membrane of the endosome and mostly are delivered to lysosomes enabling degradation of membrane proteins, such as stimulated growth factor receptors, lysosomal enzymes and lipids. The MVB pathway appears to require the sequential function of ESCRT-O, -I,-II and -III complexes. ESCRT-III proteins mostly dissociate from the invaginating membrane before the ILV is released. The ESCRT machinery also functions in topologically equivalent membrane fission events, such as the terminal stages of cytokinesis. ESCRT-III proteins are believed to mediate the necessary vesicle extrusion and/or membrane fission activities, possibly in conjunction with the AAA ATPase VPS4. Selectively binds to phosphatidylinositol 3,5-bisphosphate PtdIns(3,5)P2 and PtdIns(3,4)P2 in preference to other phosphoinositides tested. Involved in late stages of cytokinesis. Plays a role in endosomal sorting/trafficking of EGF receptor (By similarity).</text>
</comment>
<comment type="subunit">
    <text evidence="1">Probable core component of the endosomal sorting required for transport complex III (ESCRT-III). ESCRT-III components are thought to multimerize to form a flat lattice on the perimeter membrane of the endosome. Several assembly forms of ESCRT-III may exist that interact and act sequentially. Forms a metastable monomer in solution; its core structure (without part of the putative autoinhibitory C-terminal acidic region) oligomerizes into a flat lattice via two different dimerization interfaces. In vitro, heteromerizes with CHMP2A (but not CHMP4) to form helical tubular structures that expose membrane-interacting sites on the outside whereas VPS4B can associate on the inside of the tubule. May interact with IGFBP7; the relevance of such interaction however remains unclear. Interacts with CHMP2A. Interacts with CHMP4A; the interaction requires the release of CHMP4A autoinhibition. Interacts with VPS4A. Interacts with STAMBP; the interaction appears to relieve the autoinhibition of CHMP3 (By similarity). Interacts with VTA1 (By similarity).</text>
</comment>
<comment type="subcellular location">
    <subcellularLocation>
        <location evidence="1">Cytoplasm</location>
        <location evidence="1">Cytosol</location>
    </subcellularLocation>
    <subcellularLocation>
        <location evidence="1">Membrane</location>
        <topology evidence="1">Lipid-anchor</topology>
    </subcellularLocation>
    <subcellularLocation>
        <location evidence="1">Endosome</location>
    </subcellularLocation>
    <subcellularLocation>
        <location evidence="1">Late endosome membrane</location>
    </subcellularLocation>
    <text evidence="1">Localizes to the midbody of dividing cells.</text>
</comment>
<comment type="tissue specificity">
    <text evidence="5">Expressed in lung, testis, heart, spleen, skeletal muscle, kidney, liver and brain.</text>
</comment>
<comment type="domain">
    <text>The acidic C-terminus and the basic N-termminus are thought to render the protein in a closed, soluble and inactive conformation through an autoinhibitory intramolecular interaction. The open and active conformation, which enables membrane binding and oligomerization, is achieved by interaction with other cellular binding partners, probably including other ESCRT components.</text>
</comment>
<comment type="similarity">
    <text evidence="6">Belongs to the SNF7 family.</text>
</comment>
<evidence type="ECO:0000250" key="1"/>
<evidence type="ECO:0000250" key="2">
    <source>
        <dbReference type="UniProtKB" id="Q9Y3E7"/>
    </source>
</evidence>
<evidence type="ECO:0000255" key="3"/>
<evidence type="ECO:0000256" key="4">
    <source>
        <dbReference type="SAM" id="MobiDB-lite"/>
    </source>
</evidence>
<evidence type="ECO:0000269" key="5">
    <source>
    </source>
</evidence>
<evidence type="ECO:0000305" key="6"/>
<evidence type="ECO:0007744" key="7">
    <source>
    </source>
</evidence>
<gene>
    <name type="primary">Chmp3</name>
    <name type="synonym">Vps24</name>
</gene>
<name>CHMP3_MOUSE</name>
<accession>Q9CQ10</accession>
<accession>Q9D2Z2</accession>
<accession>Q9D7A5</accession>